<gene>
    <name type="primary">MDM32</name>
    <name type="ORF">Kpol_543p14</name>
</gene>
<protein>
    <recommendedName>
        <fullName>Mitochondrial distribution and morphology protein 32</fullName>
    </recommendedName>
</protein>
<comment type="function">
    <text evidence="1">Involved in the organization of the mitochondrial membranes and the global structure of the mitochondria. Also required for mitochondrial distribution and mobility as well as for the maintenance of mitochondrial DNA nucleoids structures (By similarity).</text>
</comment>
<comment type="subcellular location">
    <subcellularLocation>
        <location evidence="1">Mitochondrion inner membrane</location>
        <topology evidence="1">Multi-pass membrane protein</topology>
    </subcellularLocation>
</comment>
<comment type="similarity">
    <text evidence="3">Belongs to the MDM31/MDM32 family.</text>
</comment>
<dbReference type="EMBL" id="DS480392">
    <property type="protein sequence ID" value="EDO18185.1"/>
    <property type="molecule type" value="Genomic_DNA"/>
</dbReference>
<dbReference type="RefSeq" id="XP_001646043.1">
    <property type="nucleotide sequence ID" value="XM_001645993.1"/>
</dbReference>
<dbReference type="FunCoup" id="A7THL9">
    <property type="interactions" value="56"/>
</dbReference>
<dbReference type="GeneID" id="5546459"/>
<dbReference type="KEGG" id="vpo:Kpol_543p14"/>
<dbReference type="eggNOG" id="ENOG502QQU5">
    <property type="taxonomic scope" value="Eukaryota"/>
</dbReference>
<dbReference type="HOGENOM" id="CLU_016236_3_0_1"/>
<dbReference type="InParanoid" id="A7THL9"/>
<dbReference type="OMA" id="FAKEMVG"/>
<dbReference type="OrthoDB" id="17678at2759"/>
<dbReference type="PhylomeDB" id="A7THL9"/>
<dbReference type="Proteomes" id="UP000000267">
    <property type="component" value="Unassembled WGS sequence"/>
</dbReference>
<dbReference type="GO" id="GO:0005743">
    <property type="term" value="C:mitochondrial inner membrane"/>
    <property type="evidence" value="ECO:0007669"/>
    <property type="project" value="UniProtKB-SubCell"/>
</dbReference>
<dbReference type="GO" id="GO:0006873">
    <property type="term" value="P:intracellular monoatomic ion homeostasis"/>
    <property type="evidence" value="ECO:0007669"/>
    <property type="project" value="EnsemblFungi"/>
</dbReference>
<dbReference type="GO" id="GO:0000001">
    <property type="term" value="P:mitochondrion inheritance"/>
    <property type="evidence" value="ECO:0007669"/>
    <property type="project" value="EnsemblFungi"/>
</dbReference>
<dbReference type="GO" id="GO:0007005">
    <property type="term" value="P:mitochondrion organization"/>
    <property type="evidence" value="ECO:0007669"/>
    <property type="project" value="EnsemblFungi"/>
</dbReference>
<dbReference type="InterPro" id="IPR012571">
    <property type="entry name" value="Mdm31/Mdm32"/>
</dbReference>
<dbReference type="PANTHER" id="PTHR31068">
    <property type="entry name" value="MITOCHONDRIAL DISTRIBUTION AND MORPHOLOGY PROTEIN 31"/>
    <property type="match status" value="1"/>
</dbReference>
<dbReference type="PANTHER" id="PTHR31068:SF1">
    <property type="entry name" value="MITOCHONDRIAL DISTRIBUTION AND MORPHOLOGY PROTEIN 32"/>
    <property type="match status" value="1"/>
</dbReference>
<dbReference type="Pfam" id="PF08118">
    <property type="entry name" value="MDM31_MDM32"/>
    <property type="match status" value="1"/>
</dbReference>
<sequence length="676" mass="77502">MAGLLPRAYGGVLRRSYIYLGSQCSNSVSRLTVGSTFRLVRMKSWGTSKFHTNGSPVLNEIKKISKSNGITIINPLVNKVTTNNVSTSSNGKAAVAAATAATAVSLGSTGQDDALSRNTDFLHIQNILLQKNQDRMNKQKLLSEATNFYERFKINTKWLLIRGNRPFSADEIGTLFSWIILSQILWIILGTTTFVSILLIIFNTVFAKEMVGNVVGKLLNIFLDGIDVKFQDALVPEWRKGCIRFNNVQLRTHPLQASEPENINDYNELVNNMIEFDLKLHQIELSLSLKKWLLGNGLIQDLTIMGMRGNITVTPVSLENKIDDNQRVNLIDWFSNPYYHLGNVKVTDSSIILHDNQLSKDFKVSIYNLDMPQLRFQWIINDFLSSNVVDGSINHSLFNIHKRQHKLAYIKDLENDLSDWKRITRIRLDSIDVKKLGLNNSNAFNWMDDGQLDIIADVMLPNEQENEPDFDFTRNKKEHMSKSNNKYVVLDLKFRFKDLKAIFPDRAPRLSNGEEILSLDELKQIILFINRKYDLYHSYANSSYKNTLWDAPNIAINKAKSFPVTTVFQSKKDFSNEDSDEEDRKLKKQIIRFHDDISTPNNELVLSCKVVKNINELKNMVLFWETGIYDSLSMELYIDLMKMVEEWEYKKKTNWMTDWGSSVASQLIIVGFGAMV</sequence>
<organism>
    <name type="scientific">Vanderwaltozyma polyspora (strain ATCC 22028 / DSM 70294 / BCRC 21397 / CBS 2163 / NBRC 10782 / NRRL Y-8283 / UCD 57-17)</name>
    <name type="common">Kluyveromyces polysporus</name>
    <dbReference type="NCBI Taxonomy" id="436907"/>
    <lineage>
        <taxon>Eukaryota</taxon>
        <taxon>Fungi</taxon>
        <taxon>Dikarya</taxon>
        <taxon>Ascomycota</taxon>
        <taxon>Saccharomycotina</taxon>
        <taxon>Saccharomycetes</taxon>
        <taxon>Saccharomycetales</taxon>
        <taxon>Saccharomycetaceae</taxon>
        <taxon>Vanderwaltozyma</taxon>
    </lineage>
</organism>
<proteinExistence type="inferred from homology"/>
<reference key="1">
    <citation type="journal article" date="2007" name="Proc. Natl. Acad. Sci. U.S.A.">
        <title>Independent sorting-out of thousands of duplicated gene pairs in two yeast species descended from a whole-genome duplication.</title>
        <authorList>
            <person name="Scannell D.R."/>
            <person name="Frank A.C."/>
            <person name="Conant G.C."/>
            <person name="Byrne K.P."/>
            <person name="Woolfit M."/>
            <person name="Wolfe K.H."/>
        </authorList>
    </citation>
    <scope>NUCLEOTIDE SEQUENCE [LARGE SCALE GENOMIC DNA]</scope>
    <source>
        <strain>ATCC 22028 / DSM 70294 / BCRC 21397 / CBS 2163 / NBRC 10782 / NRRL Y-8283 / UCD 57-17</strain>
    </source>
</reference>
<accession>A7THL9</accession>
<evidence type="ECO:0000250" key="1"/>
<evidence type="ECO:0000255" key="2"/>
<evidence type="ECO:0000305" key="3"/>
<keyword id="KW-0472">Membrane</keyword>
<keyword id="KW-0496">Mitochondrion</keyword>
<keyword id="KW-0999">Mitochondrion inner membrane</keyword>
<keyword id="KW-1185">Reference proteome</keyword>
<keyword id="KW-0809">Transit peptide</keyword>
<keyword id="KW-0812">Transmembrane</keyword>
<keyword id="KW-1133">Transmembrane helix</keyword>
<name>MDM32_VANPO</name>
<feature type="transit peptide" description="Mitochondrion" evidence="2">
    <location>
        <begin position="1"/>
        <end position="17"/>
    </location>
</feature>
<feature type="chain" id="PRO_0000333680" description="Mitochondrial distribution and morphology protein 32">
    <location>
        <begin position="18"/>
        <end position="676"/>
    </location>
</feature>
<feature type="topological domain" description="Mitochondrial matrix" evidence="2">
    <location>
        <begin position="18"/>
        <end position="183"/>
    </location>
</feature>
<feature type="transmembrane region" description="Helical" evidence="2">
    <location>
        <begin position="184"/>
        <end position="204"/>
    </location>
</feature>
<feature type="topological domain" description="Mitochondrial intermembrane" evidence="2">
    <location>
        <begin position="205"/>
        <end position="655"/>
    </location>
</feature>
<feature type="transmembrane region" description="Helical" evidence="2">
    <location>
        <begin position="656"/>
        <end position="676"/>
    </location>
</feature>